<organism>
    <name type="scientific">Panesthia sp. (strain BF-2008)</name>
    <name type="common">Cockroach</name>
    <dbReference type="NCBI Taxonomy" id="521518"/>
    <lineage>
        <taxon>Eukaryota</taxon>
        <taxon>Metazoa</taxon>
        <taxon>Ecdysozoa</taxon>
        <taxon>Arthropoda</taxon>
        <taxon>Hexapoda</taxon>
        <taxon>Insecta</taxon>
        <taxon>Pterygota</taxon>
        <taxon>Neoptera</taxon>
        <taxon>Polyneoptera</taxon>
        <taxon>Dictyoptera</taxon>
        <taxon>Blattodea</taxon>
        <taxon>Blaberoidea</taxon>
        <taxon>Blaberidae</taxon>
        <taxon>Panesthiinae</taxon>
        <taxon>Panesthia</taxon>
    </lineage>
</organism>
<sequence length="11" mass="1459">EQFEDYGHMRF</sequence>
<comment type="function">
    <text evidence="1">Myotropic peptide.</text>
</comment>
<comment type="subcellular location">
    <subcellularLocation>
        <location evidence="5">Secreted</location>
    </subcellularLocation>
</comment>
<comment type="similarity">
    <text evidence="2">Belongs to the gastrin/cholecystokinin family.</text>
</comment>
<proteinExistence type="evidence at protein level"/>
<protein>
    <recommendedName>
        <fullName evidence="4">Sulfakinin-1</fullName>
        <shortName evidence="4">PanS2-SK-1</shortName>
    </recommendedName>
</protein>
<evidence type="ECO:0000250" key="1">
    <source>
        <dbReference type="UniProtKB" id="P41493"/>
    </source>
</evidence>
<evidence type="ECO:0000255" key="2"/>
<evidence type="ECO:0000269" key="3">
    <source>
    </source>
</evidence>
<evidence type="ECO:0000303" key="4">
    <source>
    </source>
</evidence>
<evidence type="ECO:0000305" key="5"/>
<name>SK1_PANSB</name>
<feature type="peptide" id="PRO_0000378887" description="Sulfakinin-1" evidence="3">
    <location>
        <begin position="1"/>
        <end position="11"/>
    </location>
</feature>
<feature type="modified residue" description="Sulfotyrosine" evidence="1">
    <location>
        <position position="6"/>
    </location>
</feature>
<feature type="modified residue" description="Phenylalanine amide" evidence="3">
    <location>
        <position position="11"/>
    </location>
</feature>
<reference evidence="5" key="1">
    <citation type="journal article" date="2009" name="BMC Evol. Biol.">
        <title>A proteomic approach for studying insect phylogeny: CAPA peptides of ancient insect taxa (Dictyoptera, Blattoptera) as a test case.</title>
        <authorList>
            <person name="Roth S."/>
            <person name="Fromm B."/>
            <person name="Gaede G."/>
            <person name="Predel R."/>
        </authorList>
    </citation>
    <scope>PROTEIN SEQUENCE</scope>
    <scope>AMIDATION AT PHE-11</scope>
    <source>
        <tissue evidence="3">Corpora cardiaca</tissue>
    </source>
</reference>
<dbReference type="GO" id="GO:0005576">
    <property type="term" value="C:extracellular region"/>
    <property type="evidence" value="ECO:0007669"/>
    <property type="project" value="UniProtKB-SubCell"/>
</dbReference>
<dbReference type="GO" id="GO:0005179">
    <property type="term" value="F:hormone activity"/>
    <property type="evidence" value="ECO:0007669"/>
    <property type="project" value="UniProtKB-KW"/>
</dbReference>
<dbReference type="GO" id="GO:0007218">
    <property type="term" value="P:neuropeptide signaling pathway"/>
    <property type="evidence" value="ECO:0007669"/>
    <property type="project" value="UniProtKB-KW"/>
</dbReference>
<dbReference type="InterPro" id="IPR013152">
    <property type="entry name" value="Gastrin/cholecystokinin_CS"/>
</dbReference>
<dbReference type="InterPro" id="IPR013259">
    <property type="entry name" value="Sulfakinin"/>
</dbReference>
<dbReference type="Pfam" id="PF08257">
    <property type="entry name" value="Sulfakinin"/>
    <property type="match status" value="1"/>
</dbReference>
<dbReference type="PROSITE" id="PS00259">
    <property type="entry name" value="GASTRIN"/>
    <property type="match status" value="1"/>
</dbReference>
<accession>P85692</accession>
<keyword id="KW-0027">Amidation</keyword>
<keyword id="KW-0903">Direct protein sequencing</keyword>
<keyword id="KW-0372">Hormone</keyword>
<keyword id="KW-0527">Neuropeptide</keyword>
<keyword id="KW-0964">Secreted</keyword>
<keyword id="KW-0765">Sulfation</keyword>